<evidence type="ECO:0000255" key="1">
    <source>
        <dbReference type="HAMAP-Rule" id="MF_01727"/>
    </source>
</evidence>
<reference key="1">
    <citation type="submission" date="2006-08" db="EMBL/GenBank/DDBJ databases">
        <title>Complete sequence of chromosome 1 of Burkholderia cepacia AMMD.</title>
        <authorList>
            <person name="Copeland A."/>
            <person name="Lucas S."/>
            <person name="Lapidus A."/>
            <person name="Barry K."/>
            <person name="Detter J.C."/>
            <person name="Glavina del Rio T."/>
            <person name="Hammon N."/>
            <person name="Israni S."/>
            <person name="Pitluck S."/>
            <person name="Bruce D."/>
            <person name="Chain P."/>
            <person name="Malfatti S."/>
            <person name="Shin M."/>
            <person name="Vergez L."/>
            <person name="Schmutz J."/>
            <person name="Larimer F."/>
            <person name="Land M."/>
            <person name="Hauser L."/>
            <person name="Kyrpides N."/>
            <person name="Kim E."/>
            <person name="Parke J."/>
            <person name="Coenye T."/>
            <person name="Konstantinidis K."/>
            <person name="Ramette A."/>
            <person name="Tiedje J."/>
            <person name="Richardson P."/>
        </authorList>
    </citation>
    <scope>NUCLEOTIDE SEQUENCE [LARGE SCALE GENOMIC DNA]</scope>
    <source>
        <strain>ATCC BAA-244 / DSM 16087 / CCUG 44356 / LMG 19182 / AMMD</strain>
    </source>
</reference>
<sequence>MAALSLKGIRKSYDGKQHVLHGIDVEIADGEFVVLVGPSGCGKSTLLRMIAGLETVTDGEIAIGDRVVNALEPKDRDIAMVFQNYALYPHMTVAQNMGYGLKIRGIERATIDSRVAAAAKILELEPLLARRPRELSGGQRQRVAMGRAIVREPSVFLFDEPLSNLDAKLRVQMRLEIQRLHARLATTSVYVTHDQIEAMTLAQRVIVMNRGYAEQIGAPVDVYEKPETVFVAGFIGSPAMNLMHGRLSEDGATFAVAGGGPALPVAGAPGIGTTIATGRDWVLGVRPEHMTPQPGVAQASLPVDSCELLGADNLAHGRWGNHDVVVRLPHADRPARGTALGAALPAHRLHFFDPETGKRAG</sequence>
<comment type="function">
    <text evidence="1">Part of the ABC transporter complex UgpBAEC involved in sn-glycerol-3-phosphate (G3P) import. Responsible for energy coupling to the transport system.</text>
</comment>
<comment type="catalytic activity">
    <reaction evidence="1">
        <text>sn-glycerol 3-phosphate(out) + ATP + H2O = sn-glycerol 3-phosphate(in) + ADP + phosphate + H(+)</text>
        <dbReference type="Rhea" id="RHEA:21668"/>
        <dbReference type="ChEBI" id="CHEBI:15377"/>
        <dbReference type="ChEBI" id="CHEBI:15378"/>
        <dbReference type="ChEBI" id="CHEBI:30616"/>
        <dbReference type="ChEBI" id="CHEBI:43474"/>
        <dbReference type="ChEBI" id="CHEBI:57597"/>
        <dbReference type="ChEBI" id="CHEBI:456216"/>
        <dbReference type="EC" id="7.6.2.10"/>
    </reaction>
</comment>
<comment type="subunit">
    <text evidence="1">The complex is composed of two ATP-binding proteins (UgpC), two transmembrane proteins (UgpA and UgpE) and a solute-binding protein (UgpB).</text>
</comment>
<comment type="subcellular location">
    <subcellularLocation>
        <location evidence="1">Cell inner membrane</location>
        <topology evidence="1">Peripheral membrane protein</topology>
    </subcellularLocation>
</comment>
<comment type="similarity">
    <text evidence="1">Belongs to the ABC transporter superfamily. sn-glycerol-3-phosphate importer (TC 3.A.1.1.3) family.</text>
</comment>
<organism>
    <name type="scientific">Burkholderia ambifaria (strain ATCC BAA-244 / DSM 16087 / CCUG 44356 / LMG 19182 / AMMD)</name>
    <name type="common">Burkholderia cepacia (strain AMMD)</name>
    <dbReference type="NCBI Taxonomy" id="339670"/>
    <lineage>
        <taxon>Bacteria</taxon>
        <taxon>Pseudomonadati</taxon>
        <taxon>Pseudomonadota</taxon>
        <taxon>Betaproteobacteria</taxon>
        <taxon>Burkholderiales</taxon>
        <taxon>Burkholderiaceae</taxon>
        <taxon>Burkholderia</taxon>
        <taxon>Burkholderia cepacia complex</taxon>
    </lineage>
</organism>
<feature type="chain" id="PRO_0000289740" description="sn-glycerol-3-phosphate import ATP-binding protein UgpC">
    <location>
        <begin position="1"/>
        <end position="361"/>
    </location>
</feature>
<feature type="domain" description="ABC transporter" evidence="1">
    <location>
        <begin position="4"/>
        <end position="235"/>
    </location>
</feature>
<feature type="binding site" evidence="1">
    <location>
        <begin position="37"/>
        <end position="44"/>
    </location>
    <ligand>
        <name>ATP</name>
        <dbReference type="ChEBI" id="CHEBI:30616"/>
    </ligand>
</feature>
<dbReference type="EC" id="7.6.2.10" evidence="1"/>
<dbReference type="EMBL" id="CP000440">
    <property type="protein sequence ID" value="ABI85877.1"/>
    <property type="molecule type" value="Genomic_DNA"/>
</dbReference>
<dbReference type="RefSeq" id="WP_011655782.1">
    <property type="nucleotide sequence ID" value="NC_008390.1"/>
</dbReference>
<dbReference type="SMR" id="Q0BIZ6"/>
<dbReference type="GeneID" id="93084268"/>
<dbReference type="KEGG" id="bam:Bamb_0317"/>
<dbReference type="PATRIC" id="fig|339670.21.peg.1302"/>
<dbReference type="eggNOG" id="COG3842">
    <property type="taxonomic scope" value="Bacteria"/>
</dbReference>
<dbReference type="Proteomes" id="UP000000662">
    <property type="component" value="Chromosome 1"/>
</dbReference>
<dbReference type="GO" id="GO:0055052">
    <property type="term" value="C:ATP-binding cassette (ABC) transporter complex, substrate-binding subunit-containing"/>
    <property type="evidence" value="ECO:0007669"/>
    <property type="project" value="TreeGrafter"/>
</dbReference>
<dbReference type="GO" id="GO:0015430">
    <property type="term" value="F:ABC-type glycerol-3-phosphate transporter activity"/>
    <property type="evidence" value="ECO:0007669"/>
    <property type="project" value="UniProtKB-EC"/>
</dbReference>
<dbReference type="GO" id="GO:0005524">
    <property type="term" value="F:ATP binding"/>
    <property type="evidence" value="ECO:0007669"/>
    <property type="project" value="UniProtKB-KW"/>
</dbReference>
<dbReference type="GO" id="GO:0016887">
    <property type="term" value="F:ATP hydrolysis activity"/>
    <property type="evidence" value="ECO:0007669"/>
    <property type="project" value="InterPro"/>
</dbReference>
<dbReference type="GO" id="GO:0008643">
    <property type="term" value="P:carbohydrate transport"/>
    <property type="evidence" value="ECO:0007669"/>
    <property type="project" value="InterPro"/>
</dbReference>
<dbReference type="GO" id="GO:0001407">
    <property type="term" value="P:glycerophosphodiester transmembrane transport"/>
    <property type="evidence" value="ECO:0007669"/>
    <property type="project" value="TreeGrafter"/>
</dbReference>
<dbReference type="CDD" id="cd03301">
    <property type="entry name" value="ABC_MalK_N"/>
    <property type="match status" value="1"/>
</dbReference>
<dbReference type="FunFam" id="3.40.50.300:FF:000042">
    <property type="entry name" value="Maltose/maltodextrin ABC transporter, ATP-binding protein"/>
    <property type="match status" value="1"/>
</dbReference>
<dbReference type="Gene3D" id="2.40.50.100">
    <property type="match status" value="1"/>
</dbReference>
<dbReference type="Gene3D" id="2.40.50.140">
    <property type="entry name" value="Nucleic acid-binding proteins"/>
    <property type="match status" value="1"/>
</dbReference>
<dbReference type="Gene3D" id="3.40.50.300">
    <property type="entry name" value="P-loop containing nucleotide triphosphate hydrolases"/>
    <property type="match status" value="1"/>
</dbReference>
<dbReference type="InterPro" id="IPR003593">
    <property type="entry name" value="AAA+_ATPase"/>
</dbReference>
<dbReference type="InterPro" id="IPR003439">
    <property type="entry name" value="ABC_transporter-like_ATP-bd"/>
</dbReference>
<dbReference type="InterPro" id="IPR017871">
    <property type="entry name" value="ABC_transporter-like_CS"/>
</dbReference>
<dbReference type="InterPro" id="IPR015855">
    <property type="entry name" value="ABC_transpr_MalK-like"/>
</dbReference>
<dbReference type="InterPro" id="IPR047641">
    <property type="entry name" value="ABC_transpr_MalK/UgpC-like"/>
</dbReference>
<dbReference type="InterPro" id="IPR008995">
    <property type="entry name" value="Mo/tungstate-bd_C_term_dom"/>
</dbReference>
<dbReference type="InterPro" id="IPR012340">
    <property type="entry name" value="NA-bd_OB-fold"/>
</dbReference>
<dbReference type="InterPro" id="IPR040582">
    <property type="entry name" value="OB_MalK-like"/>
</dbReference>
<dbReference type="InterPro" id="IPR027417">
    <property type="entry name" value="P-loop_NTPase"/>
</dbReference>
<dbReference type="NCBIfam" id="NF008653">
    <property type="entry name" value="PRK11650.1"/>
    <property type="match status" value="1"/>
</dbReference>
<dbReference type="PANTHER" id="PTHR43875">
    <property type="entry name" value="MALTODEXTRIN IMPORT ATP-BINDING PROTEIN MSMX"/>
    <property type="match status" value="1"/>
</dbReference>
<dbReference type="PANTHER" id="PTHR43875:SF12">
    <property type="entry name" value="SN-GLYCEROL-3-PHOSPHATE IMPORT ATP-BINDING PROTEIN UGPC"/>
    <property type="match status" value="1"/>
</dbReference>
<dbReference type="Pfam" id="PF00005">
    <property type="entry name" value="ABC_tran"/>
    <property type="match status" value="1"/>
</dbReference>
<dbReference type="Pfam" id="PF17912">
    <property type="entry name" value="OB_MalK"/>
    <property type="match status" value="1"/>
</dbReference>
<dbReference type="SMART" id="SM00382">
    <property type="entry name" value="AAA"/>
    <property type="match status" value="1"/>
</dbReference>
<dbReference type="SUPFAM" id="SSF50331">
    <property type="entry name" value="MOP-like"/>
    <property type="match status" value="1"/>
</dbReference>
<dbReference type="SUPFAM" id="SSF52540">
    <property type="entry name" value="P-loop containing nucleoside triphosphate hydrolases"/>
    <property type="match status" value="1"/>
</dbReference>
<dbReference type="PROSITE" id="PS00211">
    <property type="entry name" value="ABC_TRANSPORTER_1"/>
    <property type="match status" value="1"/>
</dbReference>
<dbReference type="PROSITE" id="PS50893">
    <property type="entry name" value="ABC_TRANSPORTER_2"/>
    <property type="match status" value="1"/>
</dbReference>
<dbReference type="PROSITE" id="PS51315">
    <property type="entry name" value="UGPC"/>
    <property type="match status" value="1"/>
</dbReference>
<name>UGPC_BURCM</name>
<keyword id="KW-0067">ATP-binding</keyword>
<keyword id="KW-0997">Cell inner membrane</keyword>
<keyword id="KW-1003">Cell membrane</keyword>
<keyword id="KW-0472">Membrane</keyword>
<keyword id="KW-0547">Nucleotide-binding</keyword>
<keyword id="KW-0762">Sugar transport</keyword>
<keyword id="KW-1278">Translocase</keyword>
<keyword id="KW-0813">Transport</keyword>
<proteinExistence type="inferred from homology"/>
<protein>
    <recommendedName>
        <fullName evidence="1">sn-glycerol-3-phosphate import ATP-binding protein UgpC</fullName>
        <ecNumber evidence="1">7.6.2.10</ecNumber>
    </recommendedName>
</protein>
<accession>Q0BIZ6</accession>
<gene>
    <name evidence="1" type="primary">ugpC</name>
    <name type="ordered locus">Bamb_0317</name>
</gene>